<reference key="1">
    <citation type="submission" date="2002-06" db="EMBL/GenBank/DDBJ databases">
        <title>Nucleotide sequence of bovine ubiquitin-like/S30 ribosomal fusion protein cDNA in adipose tissues of Korean cattle.</title>
        <authorList>
            <person name="Baik M."/>
            <person name="Bong J."/>
            <person name="Kong T."/>
        </authorList>
    </citation>
    <scope>NUCLEOTIDE SEQUENCE [MRNA]</scope>
    <source>
        <strain>Korean</strain>
    </source>
</reference>
<sequence>KVHGSLARAGKVRGQTPKVAKQEKKKKKTGRAKRRMQYNRRFVNVVPTFGKKKGPNANS</sequence>
<organism>
    <name type="scientific">Bos taurus</name>
    <name type="common">Bovine</name>
    <dbReference type="NCBI Taxonomy" id="9913"/>
    <lineage>
        <taxon>Eukaryota</taxon>
        <taxon>Metazoa</taxon>
        <taxon>Chordata</taxon>
        <taxon>Craniata</taxon>
        <taxon>Vertebrata</taxon>
        <taxon>Euteleostomi</taxon>
        <taxon>Mammalia</taxon>
        <taxon>Eutheria</taxon>
        <taxon>Laurasiatheria</taxon>
        <taxon>Artiodactyla</taxon>
        <taxon>Ruminantia</taxon>
        <taxon>Pecora</taxon>
        <taxon>Bovidae</taxon>
        <taxon>Bovinae</taxon>
        <taxon>Bos</taxon>
    </lineage>
</organism>
<keyword id="KW-0002">3D-structure</keyword>
<keyword id="KW-1185">Reference proteome</keyword>
<keyword id="KW-0687">Ribonucleoprotein</keyword>
<keyword id="KW-0689">Ribosomal protein</keyword>
<accession>P62866</accession>
<accession>Q8HYI8</accession>
<evidence type="ECO:0000250" key="1">
    <source>
        <dbReference type="UniProtKB" id="P62862"/>
    </source>
</evidence>
<evidence type="ECO:0000256" key="2">
    <source>
        <dbReference type="SAM" id="MobiDB-lite"/>
    </source>
</evidence>
<evidence type="ECO:0000305" key="3"/>
<comment type="miscellaneous">
    <text>This ribosomal protein is synthesized as a C-terminal extension protein (CEP) of a ubiquitin-like protein.</text>
</comment>
<comment type="similarity">
    <text evidence="3">Belongs to the eukaryotic ribosomal protein eS30 family.</text>
</comment>
<comment type="sequence caution" evidence="3">
    <conflict type="erroneous initiation">
        <sequence resource="EMBL-CDS" id="AAN77126"/>
    </conflict>
</comment>
<proteinExistence type="evidence at protein level"/>
<protein>
    <recommendedName>
        <fullName evidence="3">Small ribosomal subunit protein eS30</fullName>
    </recommendedName>
    <alternativeName>
        <fullName>40S ribosomal protein S30</fullName>
    </alternativeName>
</protein>
<name>RS30_BOVIN</name>
<feature type="chain" id="PRO_0000173997" description="Small ribosomal subunit protein eS30">
    <location>
        <begin position="1"/>
        <end position="59"/>
    </location>
</feature>
<feature type="region of interest" description="Disordered" evidence="2">
    <location>
        <begin position="1"/>
        <end position="35"/>
    </location>
</feature>
<feature type="compositionally biased region" description="Basic residues" evidence="2">
    <location>
        <begin position="23"/>
        <end position="35"/>
    </location>
</feature>
<feature type="modified residue" description="N6-succinyllysine" evidence="1">
    <location>
        <position position="51"/>
    </location>
</feature>
<dbReference type="EMBL" id="AF520959">
    <property type="protein sequence ID" value="AAN77126.1"/>
    <property type="status" value="ALT_INIT"/>
    <property type="molecule type" value="mRNA"/>
</dbReference>
<dbReference type="PDB" id="6ZVK">
    <property type="method" value="EM"/>
    <property type="resolution" value="3.49 A"/>
    <property type="chains" value="s3=2-44"/>
</dbReference>
<dbReference type="PDB" id="7A01">
    <property type="method" value="EM"/>
    <property type="resolution" value="3.60 A"/>
    <property type="chains" value="s3=2-44"/>
</dbReference>
<dbReference type="PDBsum" id="6ZVK"/>
<dbReference type="PDBsum" id="7A01"/>
<dbReference type="EMDB" id="EMD-11459"/>
<dbReference type="EMDB" id="EMD-11590"/>
<dbReference type="SMR" id="P62866"/>
<dbReference type="FunCoup" id="P62866">
    <property type="interactions" value="570"/>
</dbReference>
<dbReference type="PaxDb" id="9913-ENSBTAP00000027728"/>
<dbReference type="PeptideAtlas" id="P62866"/>
<dbReference type="eggNOG" id="KOG0001">
    <property type="taxonomic scope" value="Eukaryota"/>
</dbReference>
<dbReference type="eggNOG" id="KOG0009">
    <property type="taxonomic scope" value="Eukaryota"/>
</dbReference>
<dbReference type="HOGENOM" id="CLU_010412_5_0_1"/>
<dbReference type="InParanoid" id="P62866"/>
<dbReference type="OrthoDB" id="199599at2759"/>
<dbReference type="Proteomes" id="UP000009136">
    <property type="component" value="Unplaced"/>
</dbReference>
<dbReference type="GO" id="GO:0022627">
    <property type="term" value="C:cytosolic small ribosomal subunit"/>
    <property type="evidence" value="ECO:0000318"/>
    <property type="project" value="GO_Central"/>
</dbReference>
<dbReference type="GO" id="GO:0003735">
    <property type="term" value="F:structural constituent of ribosome"/>
    <property type="evidence" value="ECO:0007669"/>
    <property type="project" value="InterPro"/>
</dbReference>
<dbReference type="GO" id="GO:0006412">
    <property type="term" value="P:translation"/>
    <property type="evidence" value="ECO:0007669"/>
    <property type="project" value="InterPro"/>
</dbReference>
<dbReference type="InterPro" id="IPR006846">
    <property type="entry name" value="Ribosomal_eS30"/>
</dbReference>
<dbReference type="PANTHER" id="PTHR12650">
    <property type="entry name" value="40S RIBOSOMAL PROTEIN S30/UBIQUITIN-LIKE PROTEIN FUBI"/>
    <property type="match status" value="1"/>
</dbReference>
<dbReference type="PANTHER" id="PTHR12650:SF15">
    <property type="entry name" value="RIBOSOMAL PROTEIN S30, ISOFORM A"/>
    <property type="match status" value="1"/>
</dbReference>
<dbReference type="Pfam" id="PF04758">
    <property type="entry name" value="Ribosomal_S30"/>
    <property type="match status" value="1"/>
</dbReference>
<gene>
    <name type="primary">FAU</name>
</gene>